<feature type="chain" id="PRO_1000143751" description="Large ribosomal subunit protein bL21">
    <location>
        <begin position="1"/>
        <end position="101"/>
    </location>
</feature>
<sequence length="101" mass="11100">MYAVIRTGGKQYRVAQGDRVKIEKLAGDVGGKVNFDVLLVGGEGEAKVGTPTLAGVTVEGEIVAQDKHKKVIHFRKKKEGWTKKRGHRQPYTEVLITTVRA</sequence>
<name>RL21_ANASK</name>
<reference key="1">
    <citation type="submission" date="2008-08" db="EMBL/GenBank/DDBJ databases">
        <title>Complete sequence of Anaeromyxobacter sp. K.</title>
        <authorList>
            <consortium name="US DOE Joint Genome Institute"/>
            <person name="Lucas S."/>
            <person name="Copeland A."/>
            <person name="Lapidus A."/>
            <person name="Glavina del Rio T."/>
            <person name="Dalin E."/>
            <person name="Tice H."/>
            <person name="Bruce D."/>
            <person name="Goodwin L."/>
            <person name="Pitluck S."/>
            <person name="Saunders E."/>
            <person name="Brettin T."/>
            <person name="Detter J.C."/>
            <person name="Han C."/>
            <person name="Larimer F."/>
            <person name="Land M."/>
            <person name="Hauser L."/>
            <person name="Kyrpides N."/>
            <person name="Ovchinnikiva G."/>
            <person name="Beliaev A."/>
        </authorList>
    </citation>
    <scope>NUCLEOTIDE SEQUENCE [LARGE SCALE GENOMIC DNA]</scope>
    <source>
        <strain>K</strain>
    </source>
</reference>
<proteinExistence type="inferred from homology"/>
<gene>
    <name evidence="1" type="primary">rplU</name>
    <name type="ordered locus">AnaeK_4313</name>
</gene>
<keyword id="KW-0687">Ribonucleoprotein</keyword>
<keyword id="KW-0689">Ribosomal protein</keyword>
<keyword id="KW-0694">RNA-binding</keyword>
<keyword id="KW-0699">rRNA-binding</keyword>
<protein>
    <recommendedName>
        <fullName evidence="1">Large ribosomal subunit protein bL21</fullName>
    </recommendedName>
    <alternativeName>
        <fullName evidence="2">50S ribosomal protein L21</fullName>
    </alternativeName>
</protein>
<dbReference type="EMBL" id="CP001131">
    <property type="protein sequence ID" value="ACG75516.1"/>
    <property type="molecule type" value="Genomic_DNA"/>
</dbReference>
<dbReference type="RefSeq" id="WP_012528267.1">
    <property type="nucleotide sequence ID" value="NC_011145.1"/>
</dbReference>
<dbReference type="SMR" id="B4UIU4"/>
<dbReference type="KEGG" id="ank:AnaeK_4313"/>
<dbReference type="HOGENOM" id="CLU_061463_3_2_7"/>
<dbReference type="OrthoDB" id="9813334at2"/>
<dbReference type="Proteomes" id="UP000001871">
    <property type="component" value="Chromosome"/>
</dbReference>
<dbReference type="GO" id="GO:0005737">
    <property type="term" value="C:cytoplasm"/>
    <property type="evidence" value="ECO:0007669"/>
    <property type="project" value="UniProtKB-ARBA"/>
</dbReference>
<dbReference type="GO" id="GO:1990904">
    <property type="term" value="C:ribonucleoprotein complex"/>
    <property type="evidence" value="ECO:0007669"/>
    <property type="project" value="UniProtKB-KW"/>
</dbReference>
<dbReference type="GO" id="GO:0005840">
    <property type="term" value="C:ribosome"/>
    <property type="evidence" value="ECO:0007669"/>
    <property type="project" value="UniProtKB-KW"/>
</dbReference>
<dbReference type="GO" id="GO:0019843">
    <property type="term" value="F:rRNA binding"/>
    <property type="evidence" value="ECO:0007669"/>
    <property type="project" value="UniProtKB-UniRule"/>
</dbReference>
<dbReference type="GO" id="GO:0003735">
    <property type="term" value="F:structural constituent of ribosome"/>
    <property type="evidence" value="ECO:0007669"/>
    <property type="project" value="InterPro"/>
</dbReference>
<dbReference type="GO" id="GO:0006412">
    <property type="term" value="P:translation"/>
    <property type="evidence" value="ECO:0007669"/>
    <property type="project" value="UniProtKB-UniRule"/>
</dbReference>
<dbReference type="HAMAP" id="MF_01363">
    <property type="entry name" value="Ribosomal_bL21"/>
    <property type="match status" value="1"/>
</dbReference>
<dbReference type="InterPro" id="IPR028909">
    <property type="entry name" value="bL21-like"/>
</dbReference>
<dbReference type="InterPro" id="IPR036164">
    <property type="entry name" value="bL21-like_sf"/>
</dbReference>
<dbReference type="InterPro" id="IPR001787">
    <property type="entry name" value="Ribosomal_bL21"/>
</dbReference>
<dbReference type="NCBIfam" id="TIGR00061">
    <property type="entry name" value="L21"/>
    <property type="match status" value="1"/>
</dbReference>
<dbReference type="PANTHER" id="PTHR21349">
    <property type="entry name" value="50S RIBOSOMAL PROTEIN L21"/>
    <property type="match status" value="1"/>
</dbReference>
<dbReference type="PANTHER" id="PTHR21349:SF0">
    <property type="entry name" value="LARGE RIBOSOMAL SUBUNIT PROTEIN BL21M"/>
    <property type="match status" value="1"/>
</dbReference>
<dbReference type="Pfam" id="PF00829">
    <property type="entry name" value="Ribosomal_L21p"/>
    <property type="match status" value="1"/>
</dbReference>
<dbReference type="SUPFAM" id="SSF141091">
    <property type="entry name" value="L21p-like"/>
    <property type="match status" value="1"/>
</dbReference>
<evidence type="ECO:0000255" key="1">
    <source>
        <dbReference type="HAMAP-Rule" id="MF_01363"/>
    </source>
</evidence>
<evidence type="ECO:0000305" key="2"/>
<accession>B4UIU4</accession>
<comment type="function">
    <text evidence="1">This protein binds to 23S rRNA in the presence of protein L20.</text>
</comment>
<comment type="subunit">
    <text evidence="1">Part of the 50S ribosomal subunit. Contacts protein L20.</text>
</comment>
<comment type="similarity">
    <text evidence="1">Belongs to the bacterial ribosomal protein bL21 family.</text>
</comment>
<organism>
    <name type="scientific">Anaeromyxobacter sp. (strain K)</name>
    <dbReference type="NCBI Taxonomy" id="447217"/>
    <lineage>
        <taxon>Bacteria</taxon>
        <taxon>Pseudomonadati</taxon>
        <taxon>Myxococcota</taxon>
        <taxon>Myxococcia</taxon>
        <taxon>Myxococcales</taxon>
        <taxon>Cystobacterineae</taxon>
        <taxon>Anaeromyxobacteraceae</taxon>
        <taxon>Anaeromyxobacter</taxon>
    </lineage>
</organism>